<keyword id="KW-0052">Apoplast</keyword>
<keyword id="KW-1185">Reference proteome</keyword>
<keyword id="KW-0964">Secreted</keyword>
<keyword id="KW-0732">Signal</keyword>
<gene>
    <name evidence="4" type="primary">STIG1</name>
    <name type="ordered locus">Solyc03g120960</name>
</gene>
<reference key="1">
    <citation type="journal article" date="2004" name="Plant J.">
        <title>LeSTIG1, an extracellular binding partner for the pollen receptor kinases LePRK1 and LePRK2, promotes pollen tube growth in vitro.</title>
        <authorList>
            <person name="Tang W."/>
            <person name="Kelley D."/>
            <person name="Ezcurra I."/>
            <person name="Cotter R."/>
            <person name="McCormick S."/>
        </authorList>
    </citation>
    <scope>NUCLEOTIDE SEQUENCE [MRNA]</scope>
    <scope>FUNCTION</scope>
    <scope>INTERACTION WITH PRK1 AND PRK2</scope>
    <source>
        <strain>cv. VF36</strain>
        <tissue>Stigma</tissue>
    </source>
</reference>
<reference key="2">
    <citation type="journal article" date="2012" name="Nature">
        <title>The tomato genome sequence provides insights into fleshy fruit evolution.</title>
        <authorList>
            <consortium name="Tomato Genome Consortium"/>
        </authorList>
    </citation>
    <scope>NUCLEOTIDE SEQUENCE [LARGE SCALE GENOMIC DNA]</scope>
    <source>
        <strain>cv. Heinz 1706</strain>
    </source>
</reference>
<reference key="3">
    <citation type="journal article" date="2014" name="Plant Cell">
        <title>Tomato pistil factor STIG1 promotes in vivo pollen tube growth by binding to phosphatidylinositol 3-phosphate and the extracellular domain of the pollen receptor kinase LePRK2.</title>
        <authorList>
            <person name="Huang W.J."/>
            <person name="Liu H.K."/>
            <person name="McCormick S."/>
            <person name="Tang W.H."/>
        </authorList>
    </citation>
    <scope>FUNCTION</scope>
    <scope>TISSUE SPECIFICITY</scope>
    <scope>SUBCELLULAR LOCATION</scope>
    <scope>PROTEOLYTIC PROCESSING</scope>
    <scope>MUTAGENESIS OF 80-PHE--PHE-83</scope>
    <source>
        <strain>cv. VF36</strain>
    </source>
</reference>
<name>STIG1_SOLLC</name>
<proteinExistence type="evidence at protein level"/>
<organism>
    <name type="scientific">Solanum lycopersicum</name>
    <name type="common">Tomato</name>
    <name type="synonym">Lycopersicon esculentum</name>
    <dbReference type="NCBI Taxonomy" id="4081"/>
    <lineage>
        <taxon>Eukaryota</taxon>
        <taxon>Viridiplantae</taxon>
        <taxon>Streptophyta</taxon>
        <taxon>Embryophyta</taxon>
        <taxon>Tracheophyta</taxon>
        <taxon>Spermatophyta</taxon>
        <taxon>Magnoliopsida</taxon>
        <taxon>eudicotyledons</taxon>
        <taxon>Gunneridae</taxon>
        <taxon>Pentapetalae</taxon>
        <taxon>asterids</taxon>
        <taxon>lamiids</taxon>
        <taxon>Solanales</taxon>
        <taxon>Solanaceae</taxon>
        <taxon>Solanoideae</taxon>
        <taxon>Solaneae</taxon>
        <taxon>Solanum</taxon>
        <taxon>Solanum subgen. Lycopersicon</taxon>
    </lineage>
</organism>
<protein>
    <recommendedName>
        <fullName evidence="4">Protein STIG1</fullName>
        <shortName evidence="4">LeSTIG1</shortName>
    </recommendedName>
    <alternativeName>
        <fullName evidence="4">Stigma-specific protein STIG1</fullName>
    </alternativeName>
</protein>
<feature type="signal peptide" evidence="1">
    <location>
        <begin position="1"/>
        <end position="23"/>
    </location>
</feature>
<feature type="chain" id="PRO_0000431929" description="Protein STIG1" evidence="1">
    <location>
        <begin position="24"/>
        <end position="143"/>
    </location>
</feature>
<feature type="region of interest" description="Sufficient for PI(4)P binding" evidence="3">
    <location>
        <begin position="76"/>
        <end position="87"/>
    </location>
</feature>
<feature type="region of interest" description="Sufficient for binding to the extracellular domain of PRK2" evidence="3">
    <location>
        <begin position="80"/>
        <end position="83"/>
    </location>
</feature>
<feature type="region of interest" description="Sufficient for PI(3)P binding" evidence="3">
    <location>
        <begin position="88"/>
        <end position="115"/>
    </location>
</feature>
<feature type="mutagenesis site" description="No effect on the interaction with PRK2." evidence="3">
    <original>F</original>
    <variation>A</variation>
    <location>
        <position position="80"/>
    </location>
</feature>
<feature type="mutagenesis site" description="Strongly decreased interaction with PRK2 and loss of growth-promoting activity." evidence="3">
    <original>N</original>
    <variation>A</variation>
    <location>
        <position position="81"/>
    </location>
</feature>
<feature type="mutagenesis site" description="Increased interaction with PRK2." evidence="3">
    <original>YF</original>
    <variation>AA</variation>
    <location>
        <begin position="82"/>
        <end position="83"/>
    </location>
</feature>
<accession>Q6EEH1</accession>
<dbReference type="EMBL" id="AY376851">
    <property type="protein sequence ID" value="AAR27430.1"/>
    <property type="molecule type" value="mRNA"/>
</dbReference>
<dbReference type="RefSeq" id="NP_001234442.1">
    <property type="nucleotide sequence ID" value="NM_001247513.1"/>
</dbReference>
<dbReference type="STRING" id="4081.Q6EEH1"/>
<dbReference type="PaxDb" id="4081-Solyc03g120960.1.1"/>
<dbReference type="GeneID" id="543904"/>
<dbReference type="KEGG" id="sly:543904"/>
<dbReference type="eggNOG" id="ENOG502R7YC">
    <property type="taxonomic scope" value="Eukaryota"/>
</dbReference>
<dbReference type="HOGENOM" id="CLU_111795_1_0_1"/>
<dbReference type="InParanoid" id="Q6EEH1"/>
<dbReference type="OrthoDB" id="2013942at2759"/>
<dbReference type="PhylomeDB" id="Q6EEH1"/>
<dbReference type="Proteomes" id="UP000004994">
    <property type="component" value="Unplaced"/>
</dbReference>
<dbReference type="GO" id="GO:0048046">
    <property type="term" value="C:apoplast"/>
    <property type="evidence" value="ECO:0007669"/>
    <property type="project" value="UniProtKB-SubCell"/>
</dbReference>
<dbReference type="InterPro" id="IPR006969">
    <property type="entry name" value="Stig-like"/>
</dbReference>
<dbReference type="PANTHER" id="PTHR33227:SF54">
    <property type="entry name" value="PROTEIN STIG1"/>
    <property type="match status" value="1"/>
</dbReference>
<dbReference type="PANTHER" id="PTHR33227">
    <property type="entry name" value="STIGMA-SPECIFIC STIG1-LIKE PROTEIN 3"/>
    <property type="match status" value="1"/>
</dbReference>
<dbReference type="Pfam" id="PF04885">
    <property type="entry name" value="Stig1"/>
    <property type="match status" value="1"/>
</dbReference>
<comment type="function">
    <text evidence="2 3">Promotes pollen tube growth (PubMed:15255864, PubMed:24938288). A C-terminal peptide is cleaved from the propeptide in the stigmatic exudate and represent the major form of STIG1 (PubMed:24938288). Binds phosphoinositol lipids (PubMed:24938288). The binding of external phosphatidylinositol 3-phosphate (PI(3)P) and PRK2 by STIG1 induces a rapid intracellular reactive oxygen species elevation (PubMed:24938288).</text>
</comment>
<comment type="subunit">
    <text evidence="2">Interacts with PRK1 and PRK2 (via extracellular domain).</text>
</comment>
<comment type="subcellular location">
    <subcellularLocation>
        <location evidence="3">Secreted</location>
        <location evidence="3">Extracellular space</location>
        <location evidence="3">Apoplast</location>
    </subcellularLocation>
</comment>
<comment type="tissue specificity">
    <text evidence="3">Expressed in the stigma and the upper section of the style.</text>
</comment>
<comment type="similarity">
    <text evidence="5">Belongs to the STIG1 family.</text>
</comment>
<sequence length="143" mass="15412">MDFIILLIAILALSSTPITIISGSVTNHTYSTTNSYTNVALSARKVVFPPPRQLGKDNSDDDDLICKTCKRLSEHRTCCFNYFCVDLFTNRFNCGSCGLVCIVGTRCCGGICVDIKKDNGNCGKCNNVCSPGQNCSFGLCVSA</sequence>
<evidence type="ECO:0000255" key="1"/>
<evidence type="ECO:0000269" key="2">
    <source>
    </source>
</evidence>
<evidence type="ECO:0000269" key="3">
    <source>
    </source>
</evidence>
<evidence type="ECO:0000303" key="4">
    <source>
    </source>
</evidence>
<evidence type="ECO:0000305" key="5"/>